<proteinExistence type="inferred from homology"/>
<organism>
    <name type="scientific">Streptococcus suis (strain 05ZYH33)</name>
    <dbReference type="NCBI Taxonomy" id="391295"/>
    <lineage>
        <taxon>Bacteria</taxon>
        <taxon>Bacillati</taxon>
        <taxon>Bacillota</taxon>
        <taxon>Bacilli</taxon>
        <taxon>Lactobacillales</taxon>
        <taxon>Streptococcaceae</taxon>
        <taxon>Streptococcus</taxon>
    </lineage>
</organism>
<evidence type="ECO:0000255" key="1">
    <source>
        <dbReference type="HAMAP-Rule" id="MF_01817"/>
    </source>
</evidence>
<evidence type="ECO:0000255" key="2">
    <source>
        <dbReference type="PROSITE-ProRule" id="PRU01246"/>
    </source>
</evidence>
<evidence type="ECO:0000255" key="3">
    <source>
        <dbReference type="PROSITE-ProRule" id="PRU01248"/>
    </source>
</evidence>
<sequence>MKQAIESFIQSKKVSVNSQKSYTYDLQQFVTVTKGEISQQSLLVYQQSLLDLKPAAQKRKMSAVNQFLYFLYENNLLDRFYKLQTTSGPASVKKKLEREDLTLLFQESPWLEGQLIALLIAYLGLTPSEIAELTSQQVNLDFQVLTVEKGGAKRVLTLPKELIPYMESHLSGRYVFDKKGQTYSRQWFFNRLTEFVQSIGKPDWTAQKLREQYILKQIDEGKSLDQIAKQLGLKTSMSLEKFR</sequence>
<reference key="1">
    <citation type="journal article" date="2007" name="PLoS ONE">
        <title>A glimpse of streptococcal toxic shock syndrome from comparative genomics of S. suis 2 Chinese isolates.</title>
        <authorList>
            <person name="Chen C."/>
            <person name="Tang J."/>
            <person name="Dong W."/>
            <person name="Wang C."/>
            <person name="Feng Y."/>
            <person name="Wang J."/>
            <person name="Zheng F."/>
            <person name="Pan X."/>
            <person name="Liu D."/>
            <person name="Li M."/>
            <person name="Song Y."/>
            <person name="Zhu X."/>
            <person name="Sun H."/>
            <person name="Feng T."/>
            <person name="Guo Z."/>
            <person name="Ju A."/>
            <person name="Ge J."/>
            <person name="Dong Y."/>
            <person name="Sun W."/>
            <person name="Jiang Y."/>
            <person name="Wang J."/>
            <person name="Yan J."/>
            <person name="Yang H."/>
            <person name="Wang X."/>
            <person name="Gao G.F."/>
            <person name="Yang R."/>
            <person name="Wang J."/>
            <person name="Yu J."/>
        </authorList>
    </citation>
    <scope>NUCLEOTIDE SEQUENCE [LARGE SCALE GENOMIC DNA]</scope>
    <source>
        <strain>05ZYH33</strain>
    </source>
</reference>
<gene>
    <name type="ordered locus">SSU05_1702</name>
</gene>
<comment type="function">
    <text evidence="1">Putative tyrosine recombinase. Not involved in the cutting and rejoining of the recombining DNA molecules on dif(SL) site.</text>
</comment>
<comment type="subcellular location">
    <subcellularLocation>
        <location evidence="1">Cytoplasm</location>
    </subcellularLocation>
</comment>
<comment type="similarity">
    <text evidence="1">Belongs to the 'phage' integrase family. XerD-like subfamily.</text>
</comment>
<keyword id="KW-0963">Cytoplasm</keyword>
<keyword id="KW-0229">DNA integration</keyword>
<keyword id="KW-0233">DNA recombination</keyword>
<keyword id="KW-0238">DNA-binding</keyword>
<name>XERDL_STRSY</name>
<dbReference type="EMBL" id="CP000407">
    <property type="protein sequence ID" value="ABP90668.1"/>
    <property type="molecule type" value="Genomic_DNA"/>
</dbReference>
<dbReference type="SMR" id="A4VX29"/>
<dbReference type="STRING" id="391295.SSU05_1702"/>
<dbReference type="KEGG" id="ssu:SSU05_1702"/>
<dbReference type="eggNOG" id="COG0582">
    <property type="taxonomic scope" value="Bacteria"/>
</dbReference>
<dbReference type="HOGENOM" id="CLU_1128554_0_0_9"/>
<dbReference type="BioCyc" id="SSUI391295:GHI8-1756-MONOMER"/>
<dbReference type="GO" id="GO:0005737">
    <property type="term" value="C:cytoplasm"/>
    <property type="evidence" value="ECO:0007669"/>
    <property type="project" value="UniProtKB-SubCell"/>
</dbReference>
<dbReference type="GO" id="GO:0003677">
    <property type="term" value="F:DNA binding"/>
    <property type="evidence" value="ECO:0007669"/>
    <property type="project" value="UniProtKB-KW"/>
</dbReference>
<dbReference type="GO" id="GO:0009037">
    <property type="term" value="F:tyrosine-based site-specific recombinase activity"/>
    <property type="evidence" value="ECO:0007669"/>
    <property type="project" value="UniProtKB-UniRule"/>
</dbReference>
<dbReference type="GO" id="GO:0006313">
    <property type="term" value="P:DNA transposition"/>
    <property type="evidence" value="ECO:0007669"/>
    <property type="project" value="UniProtKB-UniRule"/>
</dbReference>
<dbReference type="CDD" id="cd01190">
    <property type="entry name" value="INT_StrepXerD_C_like"/>
    <property type="match status" value="1"/>
</dbReference>
<dbReference type="Gene3D" id="1.10.150.130">
    <property type="match status" value="1"/>
</dbReference>
<dbReference type="Gene3D" id="1.10.443.10">
    <property type="entry name" value="Intergrase catalytic core"/>
    <property type="match status" value="1"/>
</dbReference>
<dbReference type="HAMAP" id="MF_01817">
    <property type="entry name" value="Recomb_XerD_like"/>
    <property type="match status" value="1"/>
</dbReference>
<dbReference type="InterPro" id="IPR044068">
    <property type="entry name" value="CB"/>
</dbReference>
<dbReference type="InterPro" id="IPR011010">
    <property type="entry name" value="DNA_brk_join_enz"/>
</dbReference>
<dbReference type="InterPro" id="IPR013762">
    <property type="entry name" value="Integrase-like_cat_sf"/>
</dbReference>
<dbReference type="InterPro" id="IPR002104">
    <property type="entry name" value="Integrase_catalytic"/>
</dbReference>
<dbReference type="InterPro" id="IPR010998">
    <property type="entry name" value="Integrase_recombinase_N"/>
</dbReference>
<dbReference type="InterPro" id="IPR020876">
    <property type="entry name" value="Tyrosine_recombinase_XerD-like"/>
</dbReference>
<dbReference type="NCBIfam" id="NF002685">
    <property type="entry name" value="PRK02436.1"/>
    <property type="match status" value="1"/>
</dbReference>
<dbReference type="Pfam" id="PF00589">
    <property type="entry name" value="Phage_integrase"/>
    <property type="match status" value="1"/>
</dbReference>
<dbReference type="SUPFAM" id="SSF56349">
    <property type="entry name" value="DNA breaking-rejoining enzymes"/>
    <property type="match status" value="1"/>
</dbReference>
<dbReference type="PROSITE" id="PS51900">
    <property type="entry name" value="CB"/>
    <property type="match status" value="1"/>
</dbReference>
<dbReference type="PROSITE" id="PS51898">
    <property type="entry name" value="TYR_RECOMBINASE"/>
    <property type="match status" value="1"/>
</dbReference>
<accession>A4VX29</accession>
<protein>
    <recommendedName>
        <fullName evidence="1">Tyrosine recombinase XerD-like</fullName>
    </recommendedName>
</protein>
<feature type="chain" id="PRO_0000355195" description="Tyrosine recombinase XerD-like">
    <location>
        <begin position="1"/>
        <end position="243"/>
    </location>
</feature>
<feature type="domain" description="Core-binding (CB)" evidence="3">
    <location>
        <begin position="1"/>
        <end position="72"/>
    </location>
</feature>
<feature type="domain" description="Tyr recombinase" evidence="2">
    <location>
        <begin position="91"/>
        <end position="243"/>
    </location>
</feature>
<feature type="active site" evidence="2">
    <location>
        <position position="149"/>
    </location>
</feature>
<feature type="active site" evidence="2">
    <location>
        <position position="210"/>
    </location>
</feature>